<reference key="1">
    <citation type="journal article" date="2006" name="J. Bacteriol.">
        <title>Living with genome instability: the adaptation of phytoplasmas to diverse environments of their insect and plant hosts.</title>
        <authorList>
            <person name="Bai X."/>
            <person name="Zhang J."/>
            <person name="Ewing A."/>
            <person name="Miller S.A."/>
            <person name="Jancso Radek A."/>
            <person name="Shevchenko D.V."/>
            <person name="Tsukerman K."/>
            <person name="Walunas T."/>
            <person name="Lapidus A."/>
            <person name="Campbell J.W."/>
            <person name="Hogenhout S.A."/>
        </authorList>
    </citation>
    <scope>NUCLEOTIDE SEQUENCE [LARGE SCALE GENOMIC DNA]</scope>
    <source>
        <strain>AYWB</strain>
    </source>
</reference>
<accession>Q2NJF9</accession>
<dbReference type="EC" id="3.1.21.2" evidence="1"/>
<dbReference type="EMBL" id="CP000061">
    <property type="protein sequence ID" value="ABC65434.1"/>
    <property type="molecule type" value="Genomic_DNA"/>
</dbReference>
<dbReference type="RefSeq" id="WP_011412598.1">
    <property type="nucleotide sequence ID" value="NC_007716.1"/>
</dbReference>
<dbReference type="SMR" id="Q2NJF9"/>
<dbReference type="STRING" id="322098.AYWB_317"/>
<dbReference type="KEGG" id="ayw:AYWB_317"/>
<dbReference type="eggNOG" id="COG0648">
    <property type="taxonomic scope" value="Bacteria"/>
</dbReference>
<dbReference type="HOGENOM" id="CLU_025885_4_1_14"/>
<dbReference type="OrthoDB" id="9805666at2"/>
<dbReference type="PhylomeDB" id="Q2NJF9"/>
<dbReference type="Proteomes" id="UP000001934">
    <property type="component" value="Chromosome"/>
</dbReference>
<dbReference type="GO" id="GO:0008833">
    <property type="term" value="F:deoxyribonuclease IV (phage-T4-induced) activity"/>
    <property type="evidence" value="ECO:0007669"/>
    <property type="project" value="UniProtKB-UniRule"/>
</dbReference>
<dbReference type="GO" id="GO:0003677">
    <property type="term" value="F:DNA binding"/>
    <property type="evidence" value="ECO:0007669"/>
    <property type="project" value="InterPro"/>
</dbReference>
<dbReference type="GO" id="GO:0003906">
    <property type="term" value="F:DNA-(apurinic or apyrimidinic site) endonuclease activity"/>
    <property type="evidence" value="ECO:0007669"/>
    <property type="project" value="TreeGrafter"/>
</dbReference>
<dbReference type="GO" id="GO:0008081">
    <property type="term" value="F:phosphoric diester hydrolase activity"/>
    <property type="evidence" value="ECO:0007669"/>
    <property type="project" value="TreeGrafter"/>
</dbReference>
<dbReference type="GO" id="GO:0008270">
    <property type="term" value="F:zinc ion binding"/>
    <property type="evidence" value="ECO:0007669"/>
    <property type="project" value="UniProtKB-UniRule"/>
</dbReference>
<dbReference type="GO" id="GO:0006284">
    <property type="term" value="P:base-excision repair"/>
    <property type="evidence" value="ECO:0007669"/>
    <property type="project" value="TreeGrafter"/>
</dbReference>
<dbReference type="CDD" id="cd00019">
    <property type="entry name" value="AP2Ec"/>
    <property type="match status" value="1"/>
</dbReference>
<dbReference type="FunFam" id="3.20.20.150:FF:000001">
    <property type="entry name" value="Probable endonuclease 4"/>
    <property type="match status" value="1"/>
</dbReference>
<dbReference type="Gene3D" id="3.20.20.150">
    <property type="entry name" value="Divalent-metal-dependent TIM barrel enzymes"/>
    <property type="match status" value="1"/>
</dbReference>
<dbReference type="HAMAP" id="MF_00152">
    <property type="entry name" value="Nfo"/>
    <property type="match status" value="1"/>
</dbReference>
<dbReference type="InterPro" id="IPR001719">
    <property type="entry name" value="AP_endonuc_2"/>
</dbReference>
<dbReference type="InterPro" id="IPR018246">
    <property type="entry name" value="AP_endonuc_F2_Zn_BS"/>
</dbReference>
<dbReference type="InterPro" id="IPR036237">
    <property type="entry name" value="Xyl_isomerase-like_sf"/>
</dbReference>
<dbReference type="InterPro" id="IPR013022">
    <property type="entry name" value="Xyl_isomerase-like_TIM-brl"/>
</dbReference>
<dbReference type="NCBIfam" id="TIGR00587">
    <property type="entry name" value="nfo"/>
    <property type="match status" value="1"/>
</dbReference>
<dbReference type="NCBIfam" id="NF002196">
    <property type="entry name" value="PRK01060.1-1"/>
    <property type="match status" value="1"/>
</dbReference>
<dbReference type="PANTHER" id="PTHR21445:SF0">
    <property type="entry name" value="APURINIC-APYRIMIDINIC ENDONUCLEASE"/>
    <property type="match status" value="1"/>
</dbReference>
<dbReference type="PANTHER" id="PTHR21445">
    <property type="entry name" value="ENDONUCLEASE IV ENDODEOXYRIBONUCLEASE IV"/>
    <property type="match status" value="1"/>
</dbReference>
<dbReference type="Pfam" id="PF01261">
    <property type="entry name" value="AP_endonuc_2"/>
    <property type="match status" value="1"/>
</dbReference>
<dbReference type="SMART" id="SM00518">
    <property type="entry name" value="AP2Ec"/>
    <property type="match status" value="1"/>
</dbReference>
<dbReference type="SUPFAM" id="SSF51658">
    <property type="entry name" value="Xylose isomerase-like"/>
    <property type="match status" value="1"/>
</dbReference>
<dbReference type="PROSITE" id="PS00729">
    <property type="entry name" value="AP_NUCLEASE_F2_1"/>
    <property type="match status" value="1"/>
</dbReference>
<dbReference type="PROSITE" id="PS00730">
    <property type="entry name" value="AP_NUCLEASE_F2_2"/>
    <property type="match status" value="1"/>
</dbReference>
<dbReference type="PROSITE" id="PS00731">
    <property type="entry name" value="AP_NUCLEASE_F2_3"/>
    <property type="match status" value="1"/>
</dbReference>
<dbReference type="PROSITE" id="PS51432">
    <property type="entry name" value="AP_NUCLEASE_F2_4"/>
    <property type="match status" value="1"/>
</dbReference>
<keyword id="KW-0227">DNA damage</keyword>
<keyword id="KW-0234">DNA repair</keyword>
<keyword id="KW-0255">Endonuclease</keyword>
<keyword id="KW-0378">Hydrolase</keyword>
<keyword id="KW-0479">Metal-binding</keyword>
<keyword id="KW-0540">Nuclease</keyword>
<keyword id="KW-0862">Zinc</keyword>
<evidence type="ECO:0000255" key="1">
    <source>
        <dbReference type="HAMAP-Rule" id="MF_00152"/>
    </source>
</evidence>
<proteinExistence type="inferred from homology"/>
<protein>
    <recommendedName>
        <fullName evidence="1">Probable endonuclease 4</fullName>
        <ecNumber evidence="1">3.1.21.2</ecNumber>
    </recommendedName>
    <alternativeName>
        <fullName evidence="1">Endodeoxyribonuclease IV</fullName>
    </alternativeName>
    <alternativeName>
        <fullName evidence="1">Endonuclease IV</fullName>
    </alternativeName>
</protein>
<gene>
    <name evidence="1" type="primary">nfo</name>
    <name type="ordered locus">AYWB_317</name>
</gene>
<organism>
    <name type="scientific">Aster yellows witches'-broom phytoplasma (strain AYWB)</name>
    <dbReference type="NCBI Taxonomy" id="322098"/>
    <lineage>
        <taxon>Bacteria</taxon>
        <taxon>Bacillati</taxon>
        <taxon>Mycoplasmatota</taxon>
        <taxon>Mollicutes</taxon>
        <taxon>Acholeplasmatales</taxon>
        <taxon>Acholeplasmataceae</taxon>
        <taxon>Candidatus Phytoplasma</taxon>
        <taxon>16SrI (Aster yellows group)</taxon>
    </lineage>
</organism>
<name>END4_AYWBP</name>
<sequence length="292" mass="33195">MLFLGSHVAMKKPHNFQGSIQTAISYGANALMVYSGAPQNTIRSKTEELKIKEALKIAQNNNLSLNNLVGHAPYIINLANPDKTKRAFAIDFLSQELERFAAMKINKMVLHPGNYLKTNPQEGISLIAQSLDLIFAKTKHLKTQISLETMAGKGTEIGKRLEELQQIRTLVKNKTRVSFCLDTCHLFDAGYDLKENLEEIIQKIDSILGFQNVSVIHINDSKNECNSHKDRHENIGFGKIGFETLLKIIYHRAFVCIPKILETPYINEKEPYKHEIEMIKTKNFNPELKNLF</sequence>
<feature type="chain" id="PRO_1000011287" description="Probable endonuclease 4">
    <location>
        <begin position="1"/>
        <end position="292"/>
    </location>
</feature>
<feature type="binding site" evidence="1">
    <location>
        <position position="71"/>
    </location>
    <ligand>
        <name>Zn(2+)</name>
        <dbReference type="ChEBI" id="CHEBI:29105"/>
        <label>1</label>
    </ligand>
</feature>
<feature type="binding site" evidence="1">
    <location>
        <position position="111"/>
    </location>
    <ligand>
        <name>Zn(2+)</name>
        <dbReference type="ChEBI" id="CHEBI:29105"/>
        <label>1</label>
    </ligand>
</feature>
<feature type="binding site" evidence="1">
    <location>
        <position position="148"/>
    </location>
    <ligand>
        <name>Zn(2+)</name>
        <dbReference type="ChEBI" id="CHEBI:29105"/>
        <label>1</label>
    </ligand>
</feature>
<feature type="binding site" evidence="1">
    <location>
        <position position="148"/>
    </location>
    <ligand>
        <name>Zn(2+)</name>
        <dbReference type="ChEBI" id="CHEBI:29105"/>
        <label>2</label>
    </ligand>
</feature>
<feature type="binding site" evidence="1">
    <location>
        <position position="182"/>
    </location>
    <ligand>
        <name>Zn(2+)</name>
        <dbReference type="ChEBI" id="CHEBI:29105"/>
        <label>2</label>
    </ligand>
</feature>
<feature type="binding site" evidence="1">
    <location>
        <position position="185"/>
    </location>
    <ligand>
        <name>Zn(2+)</name>
        <dbReference type="ChEBI" id="CHEBI:29105"/>
        <label>3</label>
    </ligand>
</feature>
<feature type="binding site" evidence="1">
    <location>
        <position position="217"/>
    </location>
    <ligand>
        <name>Zn(2+)</name>
        <dbReference type="ChEBI" id="CHEBI:29105"/>
        <label>2</label>
    </ligand>
</feature>
<feature type="binding site" evidence="1">
    <location>
        <position position="230"/>
    </location>
    <ligand>
        <name>Zn(2+)</name>
        <dbReference type="ChEBI" id="CHEBI:29105"/>
        <label>3</label>
    </ligand>
</feature>
<feature type="binding site" evidence="1">
    <location>
        <position position="232"/>
    </location>
    <ligand>
        <name>Zn(2+)</name>
        <dbReference type="ChEBI" id="CHEBI:29105"/>
        <label>3</label>
    </ligand>
</feature>
<feature type="binding site" evidence="1">
    <location>
        <position position="262"/>
    </location>
    <ligand>
        <name>Zn(2+)</name>
        <dbReference type="ChEBI" id="CHEBI:29105"/>
        <label>2</label>
    </ligand>
</feature>
<comment type="function">
    <text evidence="1">Endonuclease IV plays a role in DNA repair. It cleaves phosphodiester bonds at apurinic or apyrimidinic (AP) sites, generating a 3'-hydroxyl group and a 5'-terminal sugar phosphate.</text>
</comment>
<comment type="catalytic activity">
    <reaction evidence="1">
        <text>Endonucleolytic cleavage to 5'-phosphooligonucleotide end-products.</text>
        <dbReference type="EC" id="3.1.21.2"/>
    </reaction>
</comment>
<comment type="cofactor">
    <cofactor evidence="1">
        <name>Zn(2+)</name>
        <dbReference type="ChEBI" id="CHEBI:29105"/>
    </cofactor>
    <text evidence="1">Binds 3 Zn(2+) ions.</text>
</comment>
<comment type="similarity">
    <text evidence="1">Belongs to the AP endonuclease 2 family.</text>
</comment>